<organism>
    <name type="scientific">Saccharomyces cerevisiae (strain ATCC 204508 / S288c)</name>
    <name type="common">Baker's yeast</name>
    <dbReference type="NCBI Taxonomy" id="559292"/>
    <lineage>
        <taxon>Eukaryota</taxon>
        <taxon>Fungi</taxon>
        <taxon>Dikarya</taxon>
        <taxon>Ascomycota</taxon>
        <taxon>Saccharomycotina</taxon>
        <taxon>Saccharomycetes</taxon>
        <taxon>Saccharomycetales</taxon>
        <taxon>Saccharomycetaceae</taxon>
        <taxon>Saccharomyces</taxon>
    </lineage>
</organism>
<comment type="subcellular location">
    <subcellularLocation>
        <location evidence="3">Mitochondrion membrane</location>
        <topology evidence="1">Single-pass membrane protein</topology>
    </subcellularLocation>
</comment>
<proteinExistence type="evidence at protein level"/>
<dbReference type="EMBL" id="Z74928">
    <property type="status" value="NOT_ANNOTATED_CDS"/>
    <property type="molecule type" value="Genomic_DNA"/>
</dbReference>
<dbReference type="EMBL" id="BK006948">
    <property type="protein sequence ID" value="DAA10803.1"/>
    <property type="molecule type" value="Genomic_DNA"/>
</dbReference>
<dbReference type="SMR" id="Q3E824"/>
<dbReference type="BioGRID" id="37022">
    <property type="interactions" value="28"/>
</dbReference>
<dbReference type="FunCoup" id="Q3E824">
    <property type="interactions" value="79"/>
</dbReference>
<dbReference type="STRING" id="4932.YOR020W-A"/>
<dbReference type="GlyGen" id="Q3E824">
    <property type="glycosylation" value="1 site"/>
</dbReference>
<dbReference type="iPTMnet" id="Q3E824"/>
<dbReference type="PaxDb" id="4932-YOR020W-A"/>
<dbReference type="PeptideAtlas" id="Q3E824"/>
<dbReference type="EnsemblFungi" id="YOR020W-A_mRNA">
    <property type="protein sequence ID" value="YOR020W-A"/>
    <property type="gene ID" value="YOR020W-A"/>
</dbReference>
<dbReference type="KEGG" id="sce:YOR020W-A"/>
<dbReference type="AGR" id="SGD:S000028526"/>
<dbReference type="SGD" id="S000028526">
    <property type="gene designation" value="YOR020W-A"/>
</dbReference>
<dbReference type="VEuPathDB" id="FungiDB:YOR020W-A"/>
<dbReference type="HOGENOM" id="CLU_2442108_0_0_1"/>
<dbReference type="InParanoid" id="Q3E824"/>
<dbReference type="OrthoDB" id="2094445at2759"/>
<dbReference type="BioCyc" id="YEAST:G3O-33899-MONOMER"/>
<dbReference type="BioGRID-ORCS" id="1466480">
    <property type="hits" value="0 hits in 10 CRISPR screens"/>
</dbReference>
<dbReference type="PRO" id="PR:Q3E824"/>
<dbReference type="Proteomes" id="UP000002311">
    <property type="component" value="Chromosome XV"/>
</dbReference>
<dbReference type="RNAct" id="Q3E824">
    <property type="molecule type" value="protein"/>
</dbReference>
<dbReference type="GO" id="GO:0031966">
    <property type="term" value="C:mitochondrial membrane"/>
    <property type="evidence" value="ECO:0007669"/>
    <property type="project" value="UniProtKB-SubCell"/>
</dbReference>
<dbReference type="GO" id="GO:0005739">
    <property type="term" value="C:mitochondrion"/>
    <property type="evidence" value="ECO:0007005"/>
    <property type="project" value="SGD"/>
</dbReference>
<dbReference type="GO" id="GO:0045259">
    <property type="term" value="C:proton-transporting ATP synthase complex"/>
    <property type="evidence" value="ECO:0000314"/>
    <property type="project" value="SGD"/>
</dbReference>
<dbReference type="GO" id="GO:0055074">
    <property type="term" value="P:calcium ion homeostasis"/>
    <property type="evidence" value="ECO:0000315"/>
    <property type="project" value="SGD"/>
</dbReference>
<dbReference type="GO" id="GO:0015986">
    <property type="term" value="P:proton motive force-driven ATP synthesis"/>
    <property type="evidence" value="ECO:0000318"/>
    <property type="project" value="GO_Central"/>
</dbReference>
<dbReference type="InterPro" id="IPR021278">
    <property type="entry name" value="ATP19"/>
</dbReference>
<dbReference type="PANTHER" id="PTHR28074">
    <property type="entry name" value="ATP SYNTHASE SUBUNIT K, MITOCHONDRIAL"/>
    <property type="match status" value="1"/>
</dbReference>
<dbReference type="PANTHER" id="PTHR28074:SF1">
    <property type="entry name" value="ATP SYNTHASE SUBUNIT K, MITOCHONDRIAL"/>
    <property type="match status" value="1"/>
</dbReference>
<dbReference type="Pfam" id="PF11022">
    <property type="entry name" value="ATP19"/>
    <property type="match status" value="1"/>
</dbReference>
<reference key="1">
    <citation type="journal article" date="1997" name="Nature">
        <title>The nucleotide sequence of Saccharomyces cerevisiae chromosome XV.</title>
        <authorList>
            <person name="Dujon B."/>
            <person name="Albermann K."/>
            <person name="Aldea M."/>
            <person name="Alexandraki D."/>
            <person name="Ansorge W."/>
            <person name="Arino J."/>
            <person name="Benes V."/>
            <person name="Bohn C."/>
            <person name="Bolotin-Fukuhara M."/>
            <person name="Bordonne R."/>
            <person name="Boyer J."/>
            <person name="Camasses A."/>
            <person name="Casamayor A."/>
            <person name="Casas C."/>
            <person name="Cheret G."/>
            <person name="Cziepluch C."/>
            <person name="Daignan-Fornier B."/>
            <person name="Dang V.-D."/>
            <person name="de Haan M."/>
            <person name="Delius H."/>
            <person name="Durand P."/>
            <person name="Fairhead C."/>
            <person name="Feldmann H."/>
            <person name="Gaillon L."/>
            <person name="Galisson F."/>
            <person name="Gamo F.-J."/>
            <person name="Gancedo C."/>
            <person name="Goffeau A."/>
            <person name="Goulding S.E."/>
            <person name="Grivell L.A."/>
            <person name="Habbig B."/>
            <person name="Hand N.J."/>
            <person name="Hani J."/>
            <person name="Hattenhorst U."/>
            <person name="Hebling U."/>
            <person name="Hernando Y."/>
            <person name="Herrero E."/>
            <person name="Heumann K."/>
            <person name="Hiesel R."/>
            <person name="Hilger F."/>
            <person name="Hofmann B."/>
            <person name="Hollenberg C.P."/>
            <person name="Hughes B."/>
            <person name="Jauniaux J.-C."/>
            <person name="Kalogeropoulos A."/>
            <person name="Katsoulou C."/>
            <person name="Kordes E."/>
            <person name="Lafuente M.J."/>
            <person name="Landt O."/>
            <person name="Louis E.J."/>
            <person name="Maarse A.C."/>
            <person name="Madania A."/>
            <person name="Mannhaupt G."/>
            <person name="Marck C."/>
            <person name="Martin R.P."/>
            <person name="Mewes H.-W."/>
            <person name="Michaux G."/>
            <person name="Paces V."/>
            <person name="Parle-McDermott A.G."/>
            <person name="Pearson B.M."/>
            <person name="Perrin A."/>
            <person name="Pettersson B."/>
            <person name="Poch O."/>
            <person name="Pohl T.M."/>
            <person name="Poirey R."/>
            <person name="Portetelle D."/>
            <person name="Pujol A."/>
            <person name="Purnelle B."/>
            <person name="Ramezani Rad M."/>
            <person name="Rechmann S."/>
            <person name="Schwager C."/>
            <person name="Schweizer M."/>
            <person name="Sor F."/>
            <person name="Sterky F."/>
            <person name="Tarassov I.A."/>
            <person name="Teodoru C."/>
            <person name="Tettelin H."/>
            <person name="Thierry A."/>
            <person name="Tobiasch E."/>
            <person name="Tzermia M."/>
            <person name="Uhlen M."/>
            <person name="Unseld M."/>
            <person name="Valens M."/>
            <person name="Vandenbol M."/>
            <person name="Vetter I."/>
            <person name="Vlcek C."/>
            <person name="Voet M."/>
            <person name="Volckaert G."/>
            <person name="Voss H."/>
            <person name="Wambutt R."/>
            <person name="Wedler H."/>
            <person name="Wiemann S."/>
            <person name="Winsor B."/>
            <person name="Wolfe K.H."/>
            <person name="Zollner A."/>
            <person name="Zumstein E."/>
            <person name="Kleine K."/>
        </authorList>
    </citation>
    <scope>NUCLEOTIDE SEQUENCE [LARGE SCALE GENOMIC DNA]</scope>
    <source>
        <strain>ATCC 204508 / S288c</strain>
    </source>
</reference>
<reference key="2">
    <citation type="journal article" date="2014" name="G3 (Bethesda)">
        <title>The reference genome sequence of Saccharomyces cerevisiae: Then and now.</title>
        <authorList>
            <person name="Engel S.R."/>
            <person name="Dietrich F.S."/>
            <person name="Fisk D.G."/>
            <person name="Binkley G."/>
            <person name="Balakrishnan R."/>
            <person name="Costanzo M.C."/>
            <person name="Dwight S.S."/>
            <person name="Hitz B.C."/>
            <person name="Karra K."/>
            <person name="Nash R.S."/>
            <person name="Weng S."/>
            <person name="Wong E.D."/>
            <person name="Lloyd P."/>
            <person name="Skrzypek M.S."/>
            <person name="Miyasato S.R."/>
            <person name="Simison M."/>
            <person name="Cherry J.M."/>
        </authorList>
    </citation>
    <scope>GENOME REANNOTATION</scope>
    <source>
        <strain>ATCC 204508 / S288c</strain>
    </source>
</reference>
<reference key="3">
    <citation type="journal article" date="2003" name="Genome Biol.">
        <title>Reinvestigation of the Saccharomyces cerevisiae genome annotation by comparison to the genome of a related fungus: Ashbya gossypii.</title>
        <authorList>
            <person name="Brachat S."/>
            <person name="Dietrich F.S."/>
            <person name="Voegeli S."/>
            <person name="Zhang Z."/>
            <person name="Stuart L."/>
            <person name="Lerch A."/>
            <person name="Gates K."/>
            <person name="Gaffney T.D."/>
            <person name="Philippsen P."/>
        </authorList>
    </citation>
    <scope>GENOME REANNOTATION</scope>
    <source>
        <strain>ATCC 204511 / S288c / AB972</strain>
    </source>
</reference>
<reference key="4">
    <citation type="journal article" date="2006" name="J. Proteome Res.">
        <title>Toward the complete yeast mitochondrial proteome: multidimensional separation techniques for mitochondrial proteomics.</title>
        <authorList>
            <person name="Reinders J."/>
            <person name="Zahedi R.P."/>
            <person name="Pfanner N."/>
            <person name="Meisinger C."/>
            <person name="Sickmann A."/>
        </authorList>
    </citation>
    <scope>SUBCELLULAR LOCATION [LARGE SCALE ANALYSIS]</scope>
    <scope>IDENTIFICATION BY MASS SPECTROMETRY</scope>
</reference>
<reference key="5">
    <citation type="journal article" date="2018" name="J. Proteome Res.">
        <title>Enrichment-based proteogenomics identifies microproteins, missing proteins, and novel smORFs in Saccharomyces cerevisiae.</title>
        <authorList>
            <person name="He C."/>
            <person name="Jia C."/>
            <person name="Zhang Y."/>
            <person name="Xu P."/>
        </authorList>
    </citation>
    <scope>IDENTIFICATION BY MASS SPECTROMETRY</scope>
</reference>
<sequence>MGAAYKVFGKTVQPHVLAISTFIATAAVASYFTTKPKTKNEGKNSSALSQQKSGESSNSDAMGKDDDVVKSIEGFLNDLEKDTRQDTKAN</sequence>
<protein>
    <recommendedName>
        <fullName evidence="4">Uncharacterized protein YOR020W-A</fullName>
    </recommendedName>
</protein>
<name>YO020_YEAST</name>
<evidence type="ECO:0000255" key="1"/>
<evidence type="ECO:0000256" key="2">
    <source>
        <dbReference type="SAM" id="MobiDB-lite"/>
    </source>
</evidence>
<evidence type="ECO:0000269" key="3">
    <source>
    </source>
</evidence>
<evidence type="ECO:0000305" key="4"/>
<evidence type="ECO:0000312" key="5">
    <source>
        <dbReference type="SGD" id="S000028526"/>
    </source>
</evidence>
<accession>Q3E824</accession>
<accession>D6W287</accession>
<keyword id="KW-0325">Glycoprotein</keyword>
<keyword id="KW-0472">Membrane</keyword>
<keyword id="KW-0496">Mitochondrion</keyword>
<keyword id="KW-1185">Reference proteome</keyword>
<keyword id="KW-0812">Transmembrane</keyword>
<keyword id="KW-1133">Transmembrane helix</keyword>
<feature type="chain" id="PRO_0000235939" description="Uncharacterized protein YOR020W-A">
    <location>
        <begin position="1"/>
        <end position="90"/>
    </location>
</feature>
<feature type="transmembrane region" description="Helical" evidence="1">
    <location>
        <begin position="15"/>
        <end position="34"/>
    </location>
</feature>
<feature type="region of interest" description="Disordered" evidence="2">
    <location>
        <begin position="34"/>
        <end position="65"/>
    </location>
</feature>
<feature type="compositionally biased region" description="Polar residues" evidence="2">
    <location>
        <begin position="43"/>
        <end position="60"/>
    </location>
</feature>
<feature type="glycosylation site" description="N-linked (GlcNAc...) asparagine" evidence="1">
    <location>
        <position position="44"/>
    </location>
</feature>
<gene>
    <name evidence="5" type="ordered locus">YOR020W-A</name>
</gene>